<sequence>MPSLSKEAALVHEALVARGLETPLRPPVHEMDNETRKSLIAGHMTEIMQLLNLDLADDSLMETPHRIAKMYVDEIFSGLDYANFPKITLIENKMKVDEMVTVRDITLTSTCEHHFVTIDGKATVAYIPKDSVIGLSKINRIVQFFAQRPQVQERLTQQILIALQTLLGTNNVAVSIDAVHYCVKARGIRDATSATTTTSLGGLFKSSQNTRHEFLRAVRHHN</sequence>
<name>GCH1_ECOBW</name>
<feature type="chain" id="PRO_1000204286" description="GTP cyclohydrolase 1">
    <location>
        <begin position="1"/>
        <end position="222"/>
    </location>
</feature>
<feature type="binding site" evidence="1">
    <location>
        <position position="111"/>
    </location>
    <ligand>
        <name>Zn(2+)</name>
        <dbReference type="ChEBI" id="CHEBI:29105"/>
    </ligand>
</feature>
<feature type="binding site" evidence="1">
    <location>
        <position position="114"/>
    </location>
    <ligand>
        <name>Zn(2+)</name>
        <dbReference type="ChEBI" id="CHEBI:29105"/>
    </ligand>
</feature>
<feature type="binding site" evidence="1">
    <location>
        <position position="182"/>
    </location>
    <ligand>
        <name>Zn(2+)</name>
        <dbReference type="ChEBI" id="CHEBI:29105"/>
    </ligand>
</feature>
<dbReference type="EC" id="3.5.4.16" evidence="1"/>
<dbReference type="EMBL" id="CP001396">
    <property type="protein sequence ID" value="ACR63383.1"/>
    <property type="molecule type" value="Genomic_DNA"/>
</dbReference>
<dbReference type="RefSeq" id="WP_001139613.1">
    <property type="nucleotide sequence ID" value="NC_012759.1"/>
</dbReference>
<dbReference type="SMR" id="C4ZU03"/>
<dbReference type="GeneID" id="93775029"/>
<dbReference type="KEGG" id="ebw:BWG_1935"/>
<dbReference type="HOGENOM" id="CLU_049768_3_2_6"/>
<dbReference type="UniPathway" id="UPA00848">
    <property type="reaction ID" value="UER00151"/>
</dbReference>
<dbReference type="GO" id="GO:0005737">
    <property type="term" value="C:cytoplasm"/>
    <property type="evidence" value="ECO:0007669"/>
    <property type="project" value="TreeGrafter"/>
</dbReference>
<dbReference type="GO" id="GO:0005525">
    <property type="term" value="F:GTP binding"/>
    <property type="evidence" value="ECO:0007669"/>
    <property type="project" value="UniProtKB-KW"/>
</dbReference>
<dbReference type="GO" id="GO:0003934">
    <property type="term" value="F:GTP cyclohydrolase I activity"/>
    <property type="evidence" value="ECO:0007669"/>
    <property type="project" value="UniProtKB-UniRule"/>
</dbReference>
<dbReference type="GO" id="GO:0008270">
    <property type="term" value="F:zinc ion binding"/>
    <property type="evidence" value="ECO:0007669"/>
    <property type="project" value="UniProtKB-UniRule"/>
</dbReference>
<dbReference type="GO" id="GO:0006730">
    <property type="term" value="P:one-carbon metabolic process"/>
    <property type="evidence" value="ECO:0007669"/>
    <property type="project" value="UniProtKB-UniRule"/>
</dbReference>
<dbReference type="GO" id="GO:0006729">
    <property type="term" value="P:tetrahydrobiopterin biosynthetic process"/>
    <property type="evidence" value="ECO:0007669"/>
    <property type="project" value="TreeGrafter"/>
</dbReference>
<dbReference type="GO" id="GO:0046654">
    <property type="term" value="P:tetrahydrofolate biosynthetic process"/>
    <property type="evidence" value="ECO:0007669"/>
    <property type="project" value="UniProtKB-UniRule"/>
</dbReference>
<dbReference type="CDD" id="cd00642">
    <property type="entry name" value="GTP_cyclohydro1"/>
    <property type="match status" value="1"/>
</dbReference>
<dbReference type="FunFam" id="1.10.286.10:FF:000002">
    <property type="entry name" value="GTP cyclohydrolase 1"/>
    <property type="match status" value="1"/>
</dbReference>
<dbReference type="FunFam" id="3.30.1130.10:FF:000001">
    <property type="entry name" value="GTP cyclohydrolase 1"/>
    <property type="match status" value="1"/>
</dbReference>
<dbReference type="Gene3D" id="1.10.286.10">
    <property type="match status" value="1"/>
</dbReference>
<dbReference type="Gene3D" id="3.30.1130.10">
    <property type="match status" value="1"/>
</dbReference>
<dbReference type="HAMAP" id="MF_00223">
    <property type="entry name" value="FolE"/>
    <property type="match status" value="1"/>
</dbReference>
<dbReference type="InterPro" id="IPR043133">
    <property type="entry name" value="GTP-CH-I_C/QueF"/>
</dbReference>
<dbReference type="InterPro" id="IPR043134">
    <property type="entry name" value="GTP-CH-I_N"/>
</dbReference>
<dbReference type="InterPro" id="IPR001474">
    <property type="entry name" value="GTP_CycHdrlase_I"/>
</dbReference>
<dbReference type="InterPro" id="IPR018234">
    <property type="entry name" value="GTP_CycHdrlase_I_CS"/>
</dbReference>
<dbReference type="InterPro" id="IPR020602">
    <property type="entry name" value="GTP_CycHdrlase_I_dom"/>
</dbReference>
<dbReference type="NCBIfam" id="TIGR00063">
    <property type="entry name" value="folE"/>
    <property type="match status" value="1"/>
</dbReference>
<dbReference type="NCBIfam" id="NF006824">
    <property type="entry name" value="PRK09347.1-1"/>
    <property type="match status" value="1"/>
</dbReference>
<dbReference type="NCBIfam" id="NF006826">
    <property type="entry name" value="PRK09347.1-3"/>
    <property type="match status" value="1"/>
</dbReference>
<dbReference type="PANTHER" id="PTHR11109:SF7">
    <property type="entry name" value="GTP CYCLOHYDROLASE 1"/>
    <property type="match status" value="1"/>
</dbReference>
<dbReference type="PANTHER" id="PTHR11109">
    <property type="entry name" value="GTP CYCLOHYDROLASE I"/>
    <property type="match status" value="1"/>
</dbReference>
<dbReference type="Pfam" id="PF01227">
    <property type="entry name" value="GTP_cyclohydroI"/>
    <property type="match status" value="1"/>
</dbReference>
<dbReference type="SUPFAM" id="SSF55620">
    <property type="entry name" value="Tetrahydrobiopterin biosynthesis enzymes-like"/>
    <property type="match status" value="1"/>
</dbReference>
<dbReference type="PROSITE" id="PS00859">
    <property type="entry name" value="GTP_CYCLOHYDROL_1_1"/>
    <property type="match status" value="1"/>
</dbReference>
<dbReference type="PROSITE" id="PS00860">
    <property type="entry name" value="GTP_CYCLOHYDROL_1_2"/>
    <property type="match status" value="1"/>
</dbReference>
<protein>
    <recommendedName>
        <fullName evidence="1">GTP cyclohydrolase 1</fullName>
        <ecNumber evidence="1">3.5.4.16</ecNumber>
    </recommendedName>
    <alternativeName>
        <fullName evidence="1">GTP cyclohydrolase I</fullName>
        <shortName evidence="1">GTP-CH-I</shortName>
    </alternativeName>
</protein>
<proteinExistence type="inferred from homology"/>
<evidence type="ECO:0000255" key="1">
    <source>
        <dbReference type="HAMAP-Rule" id="MF_00223"/>
    </source>
</evidence>
<accession>C4ZU03</accession>
<reference key="1">
    <citation type="journal article" date="2009" name="J. Bacteriol.">
        <title>Genomic sequencing reveals regulatory mutations and recombinational events in the widely used MC4100 lineage of Escherichia coli K-12.</title>
        <authorList>
            <person name="Ferenci T."/>
            <person name="Zhou Z."/>
            <person name="Betteridge T."/>
            <person name="Ren Y."/>
            <person name="Liu Y."/>
            <person name="Feng L."/>
            <person name="Reeves P.R."/>
            <person name="Wang L."/>
        </authorList>
    </citation>
    <scope>NUCLEOTIDE SEQUENCE [LARGE SCALE GENOMIC DNA]</scope>
    <source>
        <strain>K12 / MC4100 / BW2952</strain>
    </source>
</reference>
<keyword id="KW-0342">GTP-binding</keyword>
<keyword id="KW-0378">Hydrolase</keyword>
<keyword id="KW-0479">Metal-binding</keyword>
<keyword id="KW-0547">Nucleotide-binding</keyword>
<keyword id="KW-0554">One-carbon metabolism</keyword>
<keyword id="KW-0862">Zinc</keyword>
<organism>
    <name type="scientific">Escherichia coli (strain K12 / MC4100 / BW2952)</name>
    <dbReference type="NCBI Taxonomy" id="595496"/>
    <lineage>
        <taxon>Bacteria</taxon>
        <taxon>Pseudomonadati</taxon>
        <taxon>Pseudomonadota</taxon>
        <taxon>Gammaproteobacteria</taxon>
        <taxon>Enterobacterales</taxon>
        <taxon>Enterobacteriaceae</taxon>
        <taxon>Escherichia</taxon>
    </lineage>
</organism>
<comment type="catalytic activity">
    <reaction evidence="1">
        <text>GTP + H2O = 7,8-dihydroneopterin 3'-triphosphate + formate + H(+)</text>
        <dbReference type="Rhea" id="RHEA:17473"/>
        <dbReference type="ChEBI" id="CHEBI:15377"/>
        <dbReference type="ChEBI" id="CHEBI:15378"/>
        <dbReference type="ChEBI" id="CHEBI:15740"/>
        <dbReference type="ChEBI" id="CHEBI:37565"/>
        <dbReference type="ChEBI" id="CHEBI:58462"/>
        <dbReference type="EC" id="3.5.4.16"/>
    </reaction>
</comment>
<comment type="pathway">
    <text evidence="1">Cofactor biosynthesis; 7,8-dihydroneopterin triphosphate biosynthesis; 7,8-dihydroneopterin triphosphate from GTP: step 1/1.</text>
</comment>
<comment type="subunit">
    <text evidence="1">Homomer.</text>
</comment>
<comment type="similarity">
    <text evidence="1">Belongs to the GTP cyclohydrolase I family.</text>
</comment>
<gene>
    <name evidence="1" type="primary">folE</name>
    <name type="ordered locus">BWG_1935</name>
</gene>